<organism>
    <name type="scientific">Macrocystis pyrifera</name>
    <name type="common">Giant kelp</name>
    <name type="synonym">Fucus pyrifer</name>
    <dbReference type="NCBI Taxonomy" id="35122"/>
    <lineage>
        <taxon>Eukaryota</taxon>
        <taxon>Sar</taxon>
        <taxon>Stramenopiles</taxon>
        <taxon>Ochrophyta</taxon>
        <taxon>PX clade</taxon>
        <taxon>Phaeophyceae</taxon>
        <taxon>Laminariales</taxon>
        <taxon>Laminariaceae</taxon>
        <taxon>Macrocystis</taxon>
    </lineage>
</organism>
<gene>
    <name type="primary">FCPC</name>
</gene>
<reference key="1">
    <citation type="journal article" date="1995" name="Mol. Gen. Genet.">
        <title>The gene family encoding the fucoxanthin chlorophyll proteins from the brown alga Macrocystis pyrifera.</title>
        <authorList>
            <person name="Apt K.E."/>
            <person name="Clendennen S.K."/>
            <person name="Powers D.A."/>
            <person name="Grossman A.R."/>
        </authorList>
    </citation>
    <scope>NUCLEOTIDE SEQUENCE [MRNA]</scope>
    <source>
        <strain>MAL-1</strain>
    </source>
</reference>
<accession>Q40299</accession>
<keyword id="KW-0148">Chlorophyll</keyword>
<keyword id="KW-0150">Chloroplast</keyword>
<keyword id="KW-0157">Chromophore</keyword>
<keyword id="KW-0437">Light-harvesting polypeptide</keyword>
<keyword id="KW-0472">Membrane</keyword>
<keyword id="KW-0602">Photosynthesis</keyword>
<keyword id="KW-0604">Photosystem II</keyword>
<keyword id="KW-0934">Plastid</keyword>
<keyword id="KW-0793">Thylakoid</keyword>
<keyword id="KW-0809">Transit peptide</keyword>
<keyword id="KW-0812">Transmembrane</keyword>
<keyword id="KW-1133">Transmembrane helix</keyword>
<name>FCPC_MACPY</name>
<dbReference type="EMBL" id="U10067">
    <property type="protein sequence ID" value="AAC49020.1"/>
    <property type="molecule type" value="mRNA"/>
</dbReference>
<dbReference type="PIR" id="S53821">
    <property type="entry name" value="S53821"/>
</dbReference>
<dbReference type="SMR" id="Q40299"/>
<dbReference type="GO" id="GO:0009535">
    <property type="term" value="C:chloroplast thylakoid membrane"/>
    <property type="evidence" value="ECO:0007669"/>
    <property type="project" value="UniProtKB-SubCell"/>
</dbReference>
<dbReference type="GO" id="GO:0030076">
    <property type="term" value="C:light-harvesting complex"/>
    <property type="evidence" value="ECO:0007669"/>
    <property type="project" value="UniProtKB-KW"/>
</dbReference>
<dbReference type="GO" id="GO:0009523">
    <property type="term" value="C:photosystem II"/>
    <property type="evidence" value="ECO:0007669"/>
    <property type="project" value="UniProtKB-KW"/>
</dbReference>
<dbReference type="GO" id="GO:0016168">
    <property type="term" value="F:chlorophyll binding"/>
    <property type="evidence" value="ECO:0007669"/>
    <property type="project" value="UniProtKB-KW"/>
</dbReference>
<dbReference type="GO" id="GO:0009765">
    <property type="term" value="P:photosynthesis, light harvesting"/>
    <property type="evidence" value="ECO:0007669"/>
    <property type="project" value="InterPro"/>
</dbReference>
<dbReference type="Gene3D" id="1.10.3460.10">
    <property type="entry name" value="Chlorophyll a/b binding protein domain"/>
    <property type="match status" value="1"/>
</dbReference>
<dbReference type="InterPro" id="IPR001344">
    <property type="entry name" value="Chloro_AB-bd_pln"/>
</dbReference>
<dbReference type="InterPro" id="IPR022796">
    <property type="entry name" value="Chloroa_b-bind"/>
</dbReference>
<dbReference type="PANTHER" id="PTHR21649">
    <property type="entry name" value="CHLOROPHYLL A/B BINDING PROTEIN"/>
    <property type="match status" value="1"/>
</dbReference>
<dbReference type="Pfam" id="PF00504">
    <property type="entry name" value="Chloroa_b-bind"/>
    <property type="match status" value="1"/>
</dbReference>
<dbReference type="SUPFAM" id="SSF103511">
    <property type="entry name" value="Chlorophyll a-b binding protein"/>
    <property type="match status" value="1"/>
</dbReference>
<sequence length="216" mass="22730">MKSAIMAVASAAPGLRGPSAFNGAALTTSAKSSSAMKMSFESEIGAQAPLGFWDPLGLLEDADQDAFERLRYVEVKLGRIAMLAIAGHLTQQNARLPGMLSNSANLSFADMPNGVAALSKIPPGGLAQIFGFIGFLELAVMKNVEGSFPGDFTLGGNPFASSWDAMSAETQASKRAIELNNGRAAQMGILALMVHEELNNKPYVINDLLGASYNFN</sequence>
<comment type="function">
    <text>The light-harvesting complex (LHC) functions as a light receptor, it captures and delivers excitation energy to photosystems with which it is closely associated. Energy is transferred from the carotenoid and chlorophyll C (or B) to chlorophyll A and the photosynthetic reaction centers where it is used to synthesize ATP and reducing power.</text>
</comment>
<comment type="subunit">
    <text>The LHC complex of chromophytic algae is composed of fucoxanthin, chlorophyll A and C bound non-covalently by fucoxanthin chlorophyll proteins (FCPs). The ratio of pigments in this LHC is; fucoxanthin: chlorophyll C: chlorophyll A; (0.6-1): (0.1-0.3): (1).</text>
</comment>
<comment type="subcellular location">
    <subcellularLocation>
        <location>Plastid</location>
        <location>Chloroplast thylakoid membrane</location>
        <topology>Multi-pass membrane protein</topology>
    </subcellularLocation>
    <text>FCPs are probably transported across the endoplasmic reticulum membranes that surround the plastid via a signal peptide, followed by translocation across the thylakoid membrane via a transit peptide.</text>
</comment>
<comment type="induction">
    <text>Levels are increased twofold when transferred from high intensity to low intensity blue or white light.</text>
</comment>
<comment type="similarity">
    <text evidence="2">Belongs to the fucoxanthin chlorophyll protein family.</text>
</comment>
<proteinExistence type="evidence at transcript level"/>
<feature type="transit peptide" description="Chloroplast" evidence="2">
    <location>
        <begin position="1"/>
        <end position="38"/>
    </location>
</feature>
<feature type="chain" id="PRO_0000021237" description="Fucoxanthin-chlorophyll a-c binding protein C, chloroplastic">
    <location>
        <begin position="39"/>
        <end position="216"/>
    </location>
</feature>
<feature type="transmembrane region" description="Helical" evidence="1">
    <location>
        <begin position="80"/>
        <end position="100"/>
    </location>
</feature>
<feature type="transmembrane region" description="Helical" evidence="1">
    <location>
        <begin position="121"/>
        <end position="141"/>
    </location>
</feature>
<feature type="transmembrane region" description="Helical" evidence="1">
    <location>
        <begin position="182"/>
        <end position="202"/>
    </location>
</feature>
<evidence type="ECO:0000255" key="1"/>
<evidence type="ECO:0000305" key="2"/>
<protein>
    <recommendedName>
        <fullName>Fucoxanthin-chlorophyll a-c binding protein C, chloroplastic</fullName>
    </recommendedName>
</protein>